<sequence>MPKAKGKTRRQKFGYNVNRKRLNRNARRKAAPRIECSHIRHAWDHTKSVRQNLAEMGLAMDPNKAVPLRKKKVKAMEVDTEERPRDLVRKPYVVNDLEAEASLPEKKGNTLSRDLIDYVRYMVENHGEDYKAMARDEKNYYQDTPKQIRNKINVYKRFYPTEWQAFIDSLQSKKMEVD</sequence>
<name>NOP16_MOUSE</name>
<proteinExistence type="evidence at protein level"/>
<accession>Q9CPT5</accession>
<accession>Q8C2P2</accession>
<accession>Q921K0</accession>
<comment type="subcellular location">
    <subcellularLocation>
        <location evidence="1">Nucleus</location>
        <location evidence="1">Nucleolus</location>
    </subcellularLocation>
</comment>
<comment type="similarity">
    <text evidence="5">Belongs to the NOP16 family.</text>
</comment>
<organism>
    <name type="scientific">Mus musculus</name>
    <name type="common">Mouse</name>
    <dbReference type="NCBI Taxonomy" id="10090"/>
    <lineage>
        <taxon>Eukaryota</taxon>
        <taxon>Metazoa</taxon>
        <taxon>Chordata</taxon>
        <taxon>Craniata</taxon>
        <taxon>Vertebrata</taxon>
        <taxon>Euteleostomi</taxon>
        <taxon>Mammalia</taxon>
        <taxon>Eutheria</taxon>
        <taxon>Euarchontoglires</taxon>
        <taxon>Glires</taxon>
        <taxon>Rodentia</taxon>
        <taxon>Myomorpha</taxon>
        <taxon>Muroidea</taxon>
        <taxon>Muridae</taxon>
        <taxon>Murinae</taxon>
        <taxon>Mus</taxon>
        <taxon>Mus</taxon>
    </lineage>
</organism>
<dbReference type="EMBL" id="AK002696">
    <property type="protein sequence ID" value="BAB22290.1"/>
    <property type="molecule type" value="mRNA"/>
</dbReference>
<dbReference type="EMBL" id="AK013251">
    <property type="protein sequence ID" value="BAB28746.1"/>
    <property type="molecule type" value="mRNA"/>
</dbReference>
<dbReference type="EMBL" id="AK088248">
    <property type="protein sequence ID" value="BAC40235.1"/>
    <property type="molecule type" value="mRNA"/>
</dbReference>
<dbReference type="EMBL" id="BC012213">
    <property type="protein sequence ID" value="AAH12213.1"/>
    <property type="molecule type" value="mRNA"/>
</dbReference>
<dbReference type="CCDS" id="CCDS26531.1"/>
<dbReference type="RefSeq" id="NP_848720.1">
    <property type="nucleotide sequence ID" value="NM_178605.4"/>
</dbReference>
<dbReference type="SMR" id="Q9CPT5"/>
<dbReference type="BioGRID" id="205775">
    <property type="interactions" value="10"/>
</dbReference>
<dbReference type="FunCoup" id="Q9CPT5">
    <property type="interactions" value="3338"/>
</dbReference>
<dbReference type="IntAct" id="Q9CPT5">
    <property type="interactions" value="3"/>
</dbReference>
<dbReference type="MINT" id="Q9CPT5"/>
<dbReference type="STRING" id="10090.ENSMUSP00000026987"/>
<dbReference type="GlyGen" id="Q9CPT5">
    <property type="glycosylation" value="1 site, 1 O-linked glycan (1 site)"/>
</dbReference>
<dbReference type="iPTMnet" id="Q9CPT5"/>
<dbReference type="PhosphoSitePlus" id="Q9CPT5"/>
<dbReference type="PaxDb" id="10090-ENSMUSP00000026987"/>
<dbReference type="PeptideAtlas" id="Q9CPT5"/>
<dbReference type="ProteomicsDB" id="293702"/>
<dbReference type="Pumba" id="Q9CPT5"/>
<dbReference type="Ensembl" id="ENSMUST00000026987.12">
    <property type="protein sequence ID" value="ENSMUSP00000026987.6"/>
    <property type="gene ID" value="ENSMUSG00000025869.12"/>
</dbReference>
<dbReference type="GeneID" id="28126"/>
<dbReference type="KEGG" id="mmu:28126"/>
<dbReference type="UCSC" id="uc007qok.1">
    <property type="organism name" value="mouse"/>
</dbReference>
<dbReference type="AGR" id="MGI:107862"/>
<dbReference type="CTD" id="51491"/>
<dbReference type="MGI" id="MGI:107862">
    <property type="gene designation" value="Nop16"/>
</dbReference>
<dbReference type="VEuPathDB" id="HostDB:ENSMUSG00000025869"/>
<dbReference type="eggNOG" id="KOG4706">
    <property type="taxonomic scope" value="Eukaryota"/>
</dbReference>
<dbReference type="GeneTree" id="ENSGT00390000003426"/>
<dbReference type="HOGENOM" id="CLU_115103_0_0_1"/>
<dbReference type="InParanoid" id="Q9CPT5"/>
<dbReference type="OMA" id="IDYVKHM"/>
<dbReference type="OrthoDB" id="64779at9989"/>
<dbReference type="PhylomeDB" id="Q9CPT5"/>
<dbReference type="TreeFam" id="TF323541"/>
<dbReference type="BioGRID-ORCS" id="28126">
    <property type="hits" value="27 hits in 82 CRISPR screens"/>
</dbReference>
<dbReference type="ChiTaRS" id="Nop16">
    <property type="organism name" value="mouse"/>
</dbReference>
<dbReference type="PRO" id="PR:Q9CPT5"/>
<dbReference type="Proteomes" id="UP000000589">
    <property type="component" value="Chromosome 13"/>
</dbReference>
<dbReference type="RNAct" id="Q9CPT5">
    <property type="molecule type" value="protein"/>
</dbReference>
<dbReference type="Bgee" id="ENSMUSG00000025869">
    <property type="expression patterns" value="Expressed in ileal epithelium and 266 other cell types or tissues"/>
</dbReference>
<dbReference type="ExpressionAtlas" id="Q9CPT5">
    <property type="expression patterns" value="baseline and differential"/>
</dbReference>
<dbReference type="GO" id="GO:0005730">
    <property type="term" value="C:nucleolus"/>
    <property type="evidence" value="ECO:0007669"/>
    <property type="project" value="UniProtKB-SubCell"/>
</dbReference>
<dbReference type="GO" id="GO:0005654">
    <property type="term" value="C:nucleoplasm"/>
    <property type="evidence" value="ECO:0007669"/>
    <property type="project" value="Ensembl"/>
</dbReference>
<dbReference type="InterPro" id="IPR019002">
    <property type="entry name" value="Ribosome_biogenesis_Nop16"/>
</dbReference>
<dbReference type="PANTHER" id="PTHR13243">
    <property type="entry name" value="HSPC111 PROTEIN-RELATED"/>
    <property type="match status" value="1"/>
</dbReference>
<dbReference type="PANTHER" id="PTHR13243:SF1">
    <property type="entry name" value="NUCLEOLAR PROTEIN 16"/>
    <property type="match status" value="1"/>
</dbReference>
<dbReference type="Pfam" id="PF09420">
    <property type="entry name" value="Nop16"/>
    <property type="match status" value="2"/>
</dbReference>
<evidence type="ECO:0000250" key="1"/>
<evidence type="ECO:0000250" key="2">
    <source>
        <dbReference type="UniProtKB" id="Q9Y3C1"/>
    </source>
</evidence>
<evidence type="ECO:0000256" key="3">
    <source>
        <dbReference type="SAM" id="MobiDB-lite"/>
    </source>
</evidence>
<evidence type="ECO:0000269" key="4">
    <source>
    </source>
</evidence>
<evidence type="ECO:0000305" key="5"/>
<feature type="chain" id="PRO_0000250158" description="Nucleolar protein 16">
    <location>
        <begin position="1"/>
        <end position="178"/>
    </location>
</feature>
<feature type="region of interest" description="Disordered" evidence="3">
    <location>
        <begin position="1"/>
        <end position="30"/>
    </location>
</feature>
<feature type="modified residue" description="Phosphothreonine" evidence="2">
    <location>
        <position position="8"/>
    </location>
</feature>
<feature type="modified residue" description="N6-acetyllysine" evidence="2">
    <location>
        <position position="90"/>
    </location>
</feature>
<feature type="modified residue" description="Phosphothreonine" evidence="2">
    <location>
        <position position="144"/>
    </location>
</feature>
<feature type="cross-link" description="Glycyl lysine isopeptide (Lys-Gly) (interchain with G-Cter in SUMO2)" evidence="2">
    <location>
        <position position="74"/>
    </location>
</feature>
<feature type="sequence variant" description="In strain: NOD." evidence="4">
    <original>K</original>
    <variation>R</variation>
    <location>
        <position position="7"/>
    </location>
</feature>
<feature type="sequence variant" description="In strain: NOD." evidence="4">
    <original>K</original>
    <variation>R</variation>
    <location>
        <position position="71"/>
    </location>
</feature>
<feature type="sequence conflict" description="In Ref. 2; AAH12213." evidence="5" ref="2">
    <original>Y</original>
    <variation>S</variation>
    <location>
        <position position="155"/>
    </location>
</feature>
<reference key="1">
    <citation type="journal article" date="2005" name="Science">
        <title>The transcriptional landscape of the mammalian genome.</title>
        <authorList>
            <person name="Carninci P."/>
            <person name="Kasukawa T."/>
            <person name="Katayama S."/>
            <person name="Gough J."/>
            <person name="Frith M.C."/>
            <person name="Maeda N."/>
            <person name="Oyama R."/>
            <person name="Ravasi T."/>
            <person name="Lenhard B."/>
            <person name="Wells C."/>
            <person name="Kodzius R."/>
            <person name="Shimokawa K."/>
            <person name="Bajic V.B."/>
            <person name="Brenner S.E."/>
            <person name="Batalov S."/>
            <person name="Forrest A.R."/>
            <person name="Zavolan M."/>
            <person name="Davis M.J."/>
            <person name="Wilming L.G."/>
            <person name="Aidinis V."/>
            <person name="Allen J.E."/>
            <person name="Ambesi-Impiombato A."/>
            <person name="Apweiler R."/>
            <person name="Aturaliya R.N."/>
            <person name="Bailey T.L."/>
            <person name="Bansal M."/>
            <person name="Baxter L."/>
            <person name="Beisel K.W."/>
            <person name="Bersano T."/>
            <person name="Bono H."/>
            <person name="Chalk A.M."/>
            <person name="Chiu K.P."/>
            <person name="Choudhary V."/>
            <person name="Christoffels A."/>
            <person name="Clutterbuck D.R."/>
            <person name="Crowe M.L."/>
            <person name="Dalla E."/>
            <person name="Dalrymple B.P."/>
            <person name="de Bono B."/>
            <person name="Della Gatta G."/>
            <person name="di Bernardo D."/>
            <person name="Down T."/>
            <person name="Engstrom P."/>
            <person name="Fagiolini M."/>
            <person name="Faulkner G."/>
            <person name="Fletcher C.F."/>
            <person name="Fukushima T."/>
            <person name="Furuno M."/>
            <person name="Futaki S."/>
            <person name="Gariboldi M."/>
            <person name="Georgii-Hemming P."/>
            <person name="Gingeras T.R."/>
            <person name="Gojobori T."/>
            <person name="Green R.E."/>
            <person name="Gustincich S."/>
            <person name="Harbers M."/>
            <person name="Hayashi Y."/>
            <person name="Hensch T.K."/>
            <person name="Hirokawa N."/>
            <person name="Hill D."/>
            <person name="Huminiecki L."/>
            <person name="Iacono M."/>
            <person name="Ikeo K."/>
            <person name="Iwama A."/>
            <person name="Ishikawa T."/>
            <person name="Jakt M."/>
            <person name="Kanapin A."/>
            <person name="Katoh M."/>
            <person name="Kawasawa Y."/>
            <person name="Kelso J."/>
            <person name="Kitamura H."/>
            <person name="Kitano H."/>
            <person name="Kollias G."/>
            <person name="Krishnan S.P."/>
            <person name="Kruger A."/>
            <person name="Kummerfeld S.K."/>
            <person name="Kurochkin I.V."/>
            <person name="Lareau L.F."/>
            <person name="Lazarevic D."/>
            <person name="Lipovich L."/>
            <person name="Liu J."/>
            <person name="Liuni S."/>
            <person name="McWilliam S."/>
            <person name="Madan Babu M."/>
            <person name="Madera M."/>
            <person name="Marchionni L."/>
            <person name="Matsuda H."/>
            <person name="Matsuzawa S."/>
            <person name="Miki H."/>
            <person name="Mignone F."/>
            <person name="Miyake S."/>
            <person name="Morris K."/>
            <person name="Mottagui-Tabar S."/>
            <person name="Mulder N."/>
            <person name="Nakano N."/>
            <person name="Nakauchi H."/>
            <person name="Ng P."/>
            <person name="Nilsson R."/>
            <person name="Nishiguchi S."/>
            <person name="Nishikawa S."/>
            <person name="Nori F."/>
            <person name="Ohara O."/>
            <person name="Okazaki Y."/>
            <person name="Orlando V."/>
            <person name="Pang K.C."/>
            <person name="Pavan W.J."/>
            <person name="Pavesi G."/>
            <person name="Pesole G."/>
            <person name="Petrovsky N."/>
            <person name="Piazza S."/>
            <person name="Reed J."/>
            <person name="Reid J.F."/>
            <person name="Ring B.Z."/>
            <person name="Ringwald M."/>
            <person name="Rost B."/>
            <person name="Ruan Y."/>
            <person name="Salzberg S.L."/>
            <person name="Sandelin A."/>
            <person name="Schneider C."/>
            <person name="Schoenbach C."/>
            <person name="Sekiguchi K."/>
            <person name="Semple C.A."/>
            <person name="Seno S."/>
            <person name="Sessa L."/>
            <person name="Sheng Y."/>
            <person name="Shibata Y."/>
            <person name="Shimada H."/>
            <person name="Shimada K."/>
            <person name="Silva D."/>
            <person name="Sinclair B."/>
            <person name="Sperling S."/>
            <person name="Stupka E."/>
            <person name="Sugiura K."/>
            <person name="Sultana R."/>
            <person name="Takenaka Y."/>
            <person name="Taki K."/>
            <person name="Tammoja K."/>
            <person name="Tan S.L."/>
            <person name="Tang S."/>
            <person name="Taylor M.S."/>
            <person name="Tegner J."/>
            <person name="Teichmann S.A."/>
            <person name="Ueda H.R."/>
            <person name="van Nimwegen E."/>
            <person name="Verardo R."/>
            <person name="Wei C.L."/>
            <person name="Yagi K."/>
            <person name="Yamanishi H."/>
            <person name="Zabarovsky E."/>
            <person name="Zhu S."/>
            <person name="Zimmer A."/>
            <person name="Hide W."/>
            <person name="Bult C."/>
            <person name="Grimmond S.M."/>
            <person name="Teasdale R.D."/>
            <person name="Liu E.T."/>
            <person name="Brusic V."/>
            <person name="Quackenbush J."/>
            <person name="Wahlestedt C."/>
            <person name="Mattick J.S."/>
            <person name="Hume D.A."/>
            <person name="Kai C."/>
            <person name="Sasaki D."/>
            <person name="Tomaru Y."/>
            <person name="Fukuda S."/>
            <person name="Kanamori-Katayama M."/>
            <person name="Suzuki M."/>
            <person name="Aoki J."/>
            <person name="Arakawa T."/>
            <person name="Iida J."/>
            <person name="Imamura K."/>
            <person name="Itoh M."/>
            <person name="Kato T."/>
            <person name="Kawaji H."/>
            <person name="Kawagashira N."/>
            <person name="Kawashima T."/>
            <person name="Kojima M."/>
            <person name="Kondo S."/>
            <person name="Konno H."/>
            <person name="Nakano K."/>
            <person name="Ninomiya N."/>
            <person name="Nishio T."/>
            <person name="Okada M."/>
            <person name="Plessy C."/>
            <person name="Shibata K."/>
            <person name="Shiraki T."/>
            <person name="Suzuki S."/>
            <person name="Tagami M."/>
            <person name="Waki K."/>
            <person name="Watahiki A."/>
            <person name="Okamura-Oho Y."/>
            <person name="Suzuki H."/>
            <person name="Kawai J."/>
            <person name="Hayashizaki Y."/>
        </authorList>
    </citation>
    <scope>NUCLEOTIDE SEQUENCE [LARGE SCALE MRNA]</scope>
    <scope>VARIANTS ARG-7 AND ARG-71</scope>
    <source>
        <strain>C57BL/6J</strain>
        <strain>NOD</strain>
        <tissue>Kidney</tissue>
        <tissue>Thymus</tissue>
    </source>
</reference>
<reference key="2">
    <citation type="journal article" date="2004" name="Genome Res.">
        <title>The status, quality, and expansion of the NIH full-length cDNA project: the Mammalian Gene Collection (MGC).</title>
        <authorList>
            <consortium name="The MGC Project Team"/>
        </authorList>
    </citation>
    <scope>NUCLEOTIDE SEQUENCE [LARGE SCALE MRNA]</scope>
    <source>
        <strain>FVB/N</strain>
        <tissue>Mammary tumor</tissue>
    </source>
</reference>
<reference key="3">
    <citation type="journal article" date="2010" name="Cell">
        <title>A tissue-specific atlas of mouse protein phosphorylation and expression.</title>
        <authorList>
            <person name="Huttlin E.L."/>
            <person name="Jedrychowski M.P."/>
            <person name="Elias J.E."/>
            <person name="Goswami T."/>
            <person name="Rad R."/>
            <person name="Beausoleil S.A."/>
            <person name="Villen J."/>
            <person name="Haas W."/>
            <person name="Sowa M.E."/>
            <person name="Gygi S.P."/>
        </authorList>
    </citation>
    <scope>IDENTIFICATION BY MASS SPECTROMETRY [LARGE SCALE ANALYSIS]</scope>
    <source>
        <tissue>Brain</tissue>
        <tissue>Spleen</tissue>
        <tissue>Testis</tissue>
    </source>
</reference>
<gene>
    <name type="primary">Nop16</name>
    <name type="synonym">D13Wsu177e</name>
</gene>
<protein>
    <recommendedName>
        <fullName>Nucleolar protein 16</fullName>
    </recommendedName>
</protein>
<keyword id="KW-0007">Acetylation</keyword>
<keyword id="KW-1017">Isopeptide bond</keyword>
<keyword id="KW-0539">Nucleus</keyword>
<keyword id="KW-0597">Phosphoprotein</keyword>
<keyword id="KW-1185">Reference proteome</keyword>
<keyword id="KW-0832">Ubl conjugation</keyword>